<dbReference type="EMBL" id="CP000386">
    <property type="protein sequence ID" value="ABG05080.1"/>
    <property type="molecule type" value="Genomic_DNA"/>
</dbReference>
<dbReference type="RefSeq" id="WP_011565095.1">
    <property type="nucleotide sequence ID" value="NC_008148.1"/>
</dbReference>
<dbReference type="SMR" id="Q1AU48"/>
<dbReference type="STRING" id="266117.Rxyl_2136"/>
<dbReference type="KEGG" id="rxy:Rxyl_2136"/>
<dbReference type="eggNOG" id="COG0200">
    <property type="taxonomic scope" value="Bacteria"/>
</dbReference>
<dbReference type="HOGENOM" id="CLU_055188_4_2_11"/>
<dbReference type="OrthoDB" id="9810293at2"/>
<dbReference type="PhylomeDB" id="Q1AU48"/>
<dbReference type="Proteomes" id="UP000006637">
    <property type="component" value="Chromosome"/>
</dbReference>
<dbReference type="GO" id="GO:0022625">
    <property type="term" value="C:cytosolic large ribosomal subunit"/>
    <property type="evidence" value="ECO:0007669"/>
    <property type="project" value="TreeGrafter"/>
</dbReference>
<dbReference type="GO" id="GO:0019843">
    <property type="term" value="F:rRNA binding"/>
    <property type="evidence" value="ECO:0007669"/>
    <property type="project" value="UniProtKB-UniRule"/>
</dbReference>
<dbReference type="GO" id="GO:0003735">
    <property type="term" value="F:structural constituent of ribosome"/>
    <property type="evidence" value="ECO:0007669"/>
    <property type="project" value="InterPro"/>
</dbReference>
<dbReference type="GO" id="GO:0006412">
    <property type="term" value="P:translation"/>
    <property type="evidence" value="ECO:0007669"/>
    <property type="project" value="UniProtKB-UniRule"/>
</dbReference>
<dbReference type="Gene3D" id="3.100.10.10">
    <property type="match status" value="1"/>
</dbReference>
<dbReference type="HAMAP" id="MF_01341">
    <property type="entry name" value="Ribosomal_uL15"/>
    <property type="match status" value="1"/>
</dbReference>
<dbReference type="InterPro" id="IPR030878">
    <property type="entry name" value="Ribosomal_uL15"/>
</dbReference>
<dbReference type="InterPro" id="IPR021131">
    <property type="entry name" value="Ribosomal_uL15/eL18"/>
</dbReference>
<dbReference type="InterPro" id="IPR036227">
    <property type="entry name" value="Ribosomal_uL15/eL18_sf"/>
</dbReference>
<dbReference type="InterPro" id="IPR005749">
    <property type="entry name" value="Ribosomal_uL15_bac-type"/>
</dbReference>
<dbReference type="InterPro" id="IPR001196">
    <property type="entry name" value="Ribosomal_uL15_CS"/>
</dbReference>
<dbReference type="NCBIfam" id="TIGR01071">
    <property type="entry name" value="rplO_bact"/>
    <property type="match status" value="1"/>
</dbReference>
<dbReference type="PANTHER" id="PTHR12934">
    <property type="entry name" value="50S RIBOSOMAL PROTEIN L15"/>
    <property type="match status" value="1"/>
</dbReference>
<dbReference type="PANTHER" id="PTHR12934:SF11">
    <property type="entry name" value="LARGE RIBOSOMAL SUBUNIT PROTEIN UL15M"/>
    <property type="match status" value="1"/>
</dbReference>
<dbReference type="Pfam" id="PF00828">
    <property type="entry name" value="Ribosomal_L27A"/>
    <property type="match status" value="1"/>
</dbReference>
<dbReference type="SUPFAM" id="SSF52080">
    <property type="entry name" value="Ribosomal proteins L15p and L18e"/>
    <property type="match status" value="1"/>
</dbReference>
<dbReference type="PROSITE" id="PS00475">
    <property type="entry name" value="RIBOSOMAL_L15"/>
    <property type="match status" value="1"/>
</dbReference>
<proteinExistence type="inferred from homology"/>
<keyword id="KW-1185">Reference proteome</keyword>
<keyword id="KW-0687">Ribonucleoprotein</keyword>
<keyword id="KW-0689">Ribosomal protein</keyword>
<keyword id="KW-0694">RNA-binding</keyword>
<keyword id="KW-0699">rRNA-binding</keyword>
<comment type="function">
    <text evidence="1">Binds to the 23S rRNA.</text>
</comment>
<comment type="subunit">
    <text evidence="1">Part of the 50S ribosomal subunit.</text>
</comment>
<comment type="similarity">
    <text evidence="1">Belongs to the universal ribosomal protein uL15 family.</text>
</comment>
<organism>
    <name type="scientific">Rubrobacter xylanophilus (strain DSM 9941 / JCM 11954 / NBRC 16129 / PRD-1)</name>
    <dbReference type="NCBI Taxonomy" id="266117"/>
    <lineage>
        <taxon>Bacteria</taxon>
        <taxon>Bacillati</taxon>
        <taxon>Actinomycetota</taxon>
        <taxon>Rubrobacteria</taxon>
        <taxon>Rubrobacterales</taxon>
        <taxon>Rubrobacteraceae</taxon>
        <taxon>Rubrobacter</taxon>
    </lineage>
</organism>
<feature type="chain" id="PRO_0000251557" description="Large ribosomal subunit protein uL15">
    <location>
        <begin position="1"/>
        <end position="152"/>
    </location>
</feature>
<feature type="region of interest" description="Disordered" evidence="2">
    <location>
        <begin position="1"/>
        <end position="79"/>
    </location>
</feature>
<feature type="compositionally biased region" description="Gly residues" evidence="2">
    <location>
        <begin position="22"/>
        <end position="35"/>
    </location>
</feature>
<name>RL15_RUBXD</name>
<reference key="1">
    <citation type="submission" date="2006-06" db="EMBL/GenBank/DDBJ databases">
        <title>Complete sequence of Rubrobacter xylanophilus DSM 9941.</title>
        <authorList>
            <consortium name="US DOE Joint Genome Institute"/>
            <person name="Copeland A."/>
            <person name="Lucas S."/>
            <person name="Lapidus A."/>
            <person name="Barry K."/>
            <person name="Detter J.C."/>
            <person name="Glavina del Rio T."/>
            <person name="Hammon N."/>
            <person name="Israni S."/>
            <person name="Dalin E."/>
            <person name="Tice H."/>
            <person name="Pitluck S."/>
            <person name="Munk A.C."/>
            <person name="Brettin T."/>
            <person name="Bruce D."/>
            <person name="Han C."/>
            <person name="Tapia R."/>
            <person name="Gilna P."/>
            <person name="Schmutz J."/>
            <person name="Larimer F."/>
            <person name="Land M."/>
            <person name="Hauser L."/>
            <person name="Kyrpides N."/>
            <person name="Lykidis A."/>
            <person name="da Costa M.S."/>
            <person name="Rainey F.A."/>
            <person name="Empadinhas N."/>
            <person name="Jolivet E."/>
            <person name="Battista J.R."/>
            <person name="Richardson P."/>
        </authorList>
    </citation>
    <scope>NUCLEOTIDE SEQUENCE [LARGE SCALE GENOMIC DNA]</scope>
    <source>
        <strain>DSM 9941 / JCM 11954 / NBRC 16129 / PRD-1</strain>
    </source>
</reference>
<accession>Q1AU48</accession>
<gene>
    <name evidence="1" type="primary">rplO</name>
    <name type="ordered locus">Rxyl_2136</name>
</gene>
<sequence>MRLNELSPPPGSRRARKRVGRGEGSGYGKTSGRGQKGAKARSGTKAYTTYEGGQMPLQRRLPRLKGEARGRHTPAHPKVYDPVNVGELAAVEGDTIGLDELRAAGLIRKKADTLVKILGDGEIDRPVTVRAHAFSRAAREKIEAAGGRAEVL</sequence>
<evidence type="ECO:0000255" key="1">
    <source>
        <dbReference type="HAMAP-Rule" id="MF_01341"/>
    </source>
</evidence>
<evidence type="ECO:0000256" key="2">
    <source>
        <dbReference type="SAM" id="MobiDB-lite"/>
    </source>
</evidence>
<evidence type="ECO:0000305" key="3"/>
<protein>
    <recommendedName>
        <fullName evidence="1">Large ribosomal subunit protein uL15</fullName>
    </recommendedName>
    <alternativeName>
        <fullName evidence="3">50S ribosomal protein L15</fullName>
    </alternativeName>
</protein>